<evidence type="ECO:0000255" key="1">
    <source>
        <dbReference type="HAMAP-Rule" id="MF_00076"/>
    </source>
</evidence>
<name>HIS7_BACCR</name>
<gene>
    <name evidence="1" type="primary">hisB</name>
    <name type="ordered locus">BC_1407</name>
</gene>
<feature type="chain" id="PRO_0000158104" description="Imidazoleglycerol-phosphate dehydratase">
    <location>
        <begin position="1"/>
        <end position="194"/>
    </location>
</feature>
<accession>Q81G05</accession>
<proteinExistence type="inferred from homology"/>
<keyword id="KW-0028">Amino-acid biosynthesis</keyword>
<keyword id="KW-0963">Cytoplasm</keyword>
<keyword id="KW-0368">Histidine biosynthesis</keyword>
<keyword id="KW-0456">Lyase</keyword>
<keyword id="KW-1185">Reference proteome</keyword>
<reference key="1">
    <citation type="journal article" date="2003" name="Nature">
        <title>Genome sequence of Bacillus cereus and comparative analysis with Bacillus anthracis.</title>
        <authorList>
            <person name="Ivanova N."/>
            <person name="Sorokin A."/>
            <person name="Anderson I."/>
            <person name="Galleron N."/>
            <person name="Candelon B."/>
            <person name="Kapatral V."/>
            <person name="Bhattacharyya A."/>
            <person name="Reznik G."/>
            <person name="Mikhailova N."/>
            <person name="Lapidus A."/>
            <person name="Chu L."/>
            <person name="Mazur M."/>
            <person name="Goltsman E."/>
            <person name="Larsen N."/>
            <person name="D'Souza M."/>
            <person name="Walunas T."/>
            <person name="Grechkin Y."/>
            <person name="Pusch G."/>
            <person name="Haselkorn R."/>
            <person name="Fonstein M."/>
            <person name="Ehrlich S.D."/>
            <person name="Overbeek R."/>
            <person name="Kyrpides N.C."/>
        </authorList>
    </citation>
    <scope>NUCLEOTIDE SEQUENCE [LARGE SCALE GENOMIC DNA]</scope>
    <source>
        <strain>ATCC 14579 / DSM 31 / CCUG 7414 / JCM 2152 / NBRC 15305 / NCIMB 9373 / NCTC 2599 / NRRL B-3711</strain>
    </source>
</reference>
<dbReference type="EC" id="4.2.1.19" evidence="1"/>
<dbReference type="EMBL" id="AE016877">
    <property type="protein sequence ID" value="AAP08388.1"/>
    <property type="molecule type" value="Genomic_DNA"/>
</dbReference>
<dbReference type="RefSeq" id="NP_831187.1">
    <property type="nucleotide sequence ID" value="NC_004722.1"/>
</dbReference>
<dbReference type="RefSeq" id="WP_001249949.1">
    <property type="nucleotide sequence ID" value="NZ_CP138336.1"/>
</dbReference>
<dbReference type="SMR" id="Q81G05"/>
<dbReference type="STRING" id="226900.BC_1407"/>
<dbReference type="KEGG" id="bce:BC1407"/>
<dbReference type="PATRIC" id="fig|226900.8.peg.1384"/>
<dbReference type="HOGENOM" id="CLU_044308_3_0_9"/>
<dbReference type="OrthoDB" id="9790411at2"/>
<dbReference type="UniPathway" id="UPA00031">
    <property type="reaction ID" value="UER00011"/>
</dbReference>
<dbReference type="Proteomes" id="UP000001417">
    <property type="component" value="Chromosome"/>
</dbReference>
<dbReference type="GO" id="GO:0005737">
    <property type="term" value="C:cytoplasm"/>
    <property type="evidence" value="ECO:0007669"/>
    <property type="project" value="UniProtKB-SubCell"/>
</dbReference>
<dbReference type="GO" id="GO:0004424">
    <property type="term" value="F:imidazoleglycerol-phosphate dehydratase activity"/>
    <property type="evidence" value="ECO:0000318"/>
    <property type="project" value="GO_Central"/>
</dbReference>
<dbReference type="GO" id="GO:0000105">
    <property type="term" value="P:L-histidine biosynthetic process"/>
    <property type="evidence" value="ECO:0000318"/>
    <property type="project" value="GO_Central"/>
</dbReference>
<dbReference type="CDD" id="cd07914">
    <property type="entry name" value="IGPD"/>
    <property type="match status" value="1"/>
</dbReference>
<dbReference type="FunFam" id="3.30.230.40:FF:000001">
    <property type="entry name" value="Imidazoleglycerol-phosphate dehydratase HisB"/>
    <property type="match status" value="1"/>
</dbReference>
<dbReference type="FunFam" id="3.30.230.40:FF:000003">
    <property type="entry name" value="Imidazoleglycerol-phosphate dehydratase HisB"/>
    <property type="match status" value="1"/>
</dbReference>
<dbReference type="Gene3D" id="3.30.230.40">
    <property type="entry name" value="Imidazole glycerol phosphate dehydratase, domain 1"/>
    <property type="match status" value="2"/>
</dbReference>
<dbReference type="HAMAP" id="MF_00076">
    <property type="entry name" value="HisB"/>
    <property type="match status" value="1"/>
</dbReference>
<dbReference type="InterPro" id="IPR038494">
    <property type="entry name" value="IGPD_sf"/>
</dbReference>
<dbReference type="InterPro" id="IPR000807">
    <property type="entry name" value="ImidazoleglycerolP_deHydtase"/>
</dbReference>
<dbReference type="InterPro" id="IPR020565">
    <property type="entry name" value="ImidazoleglycerP_deHydtase_CS"/>
</dbReference>
<dbReference type="InterPro" id="IPR020568">
    <property type="entry name" value="Ribosomal_Su5_D2-typ_SF"/>
</dbReference>
<dbReference type="NCBIfam" id="NF002107">
    <property type="entry name" value="PRK00951.1-2"/>
    <property type="match status" value="1"/>
</dbReference>
<dbReference type="NCBIfam" id="NF002111">
    <property type="entry name" value="PRK00951.2-1"/>
    <property type="match status" value="1"/>
</dbReference>
<dbReference type="NCBIfam" id="NF002114">
    <property type="entry name" value="PRK00951.2-4"/>
    <property type="match status" value="1"/>
</dbReference>
<dbReference type="PANTHER" id="PTHR23133:SF2">
    <property type="entry name" value="IMIDAZOLEGLYCEROL-PHOSPHATE DEHYDRATASE"/>
    <property type="match status" value="1"/>
</dbReference>
<dbReference type="PANTHER" id="PTHR23133">
    <property type="entry name" value="IMIDAZOLEGLYCEROL-PHOSPHATE DEHYDRATASE HIS7"/>
    <property type="match status" value="1"/>
</dbReference>
<dbReference type="Pfam" id="PF00475">
    <property type="entry name" value="IGPD"/>
    <property type="match status" value="1"/>
</dbReference>
<dbReference type="SUPFAM" id="SSF54211">
    <property type="entry name" value="Ribosomal protein S5 domain 2-like"/>
    <property type="match status" value="2"/>
</dbReference>
<dbReference type="PROSITE" id="PS00954">
    <property type="entry name" value="IGP_DEHYDRATASE_1"/>
    <property type="match status" value="1"/>
</dbReference>
<dbReference type="PROSITE" id="PS00955">
    <property type="entry name" value="IGP_DEHYDRATASE_2"/>
    <property type="match status" value="1"/>
</dbReference>
<organism>
    <name type="scientific">Bacillus cereus (strain ATCC 14579 / DSM 31 / CCUG 7414 / JCM 2152 / NBRC 15305 / NCIMB 9373 / NCTC 2599 / NRRL B-3711)</name>
    <dbReference type="NCBI Taxonomy" id="226900"/>
    <lineage>
        <taxon>Bacteria</taxon>
        <taxon>Bacillati</taxon>
        <taxon>Bacillota</taxon>
        <taxon>Bacilli</taxon>
        <taxon>Bacillales</taxon>
        <taxon>Bacillaceae</taxon>
        <taxon>Bacillus</taxon>
        <taxon>Bacillus cereus group</taxon>
    </lineage>
</organism>
<comment type="catalytic activity">
    <reaction evidence="1">
        <text>D-erythro-1-(imidazol-4-yl)glycerol 3-phosphate = 3-(imidazol-4-yl)-2-oxopropyl phosphate + H2O</text>
        <dbReference type="Rhea" id="RHEA:11040"/>
        <dbReference type="ChEBI" id="CHEBI:15377"/>
        <dbReference type="ChEBI" id="CHEBI:57766"/>
        <dbReference type="ChEBI" id="CHEBI:58278"/>
        <dbReference type="EC" id="4.2.1.19"/>
    </reaction>
</comment>
<comment type="pathway">
    <text evidence="1">Amino-acid biosynthesis; L-histidine biosynthesis; L-histidine from 5-phospho-alpha-D-ribose 1-diphosphate: step 6/9.</text>
</comment>
<comment type="subcellular location">
    <subcellularLocation>
        <location evidence="1">Cytoplasm</location>
    </subcellularLocation>
</comment>
<comment type="similarity">
    <text evidence="1">Belongs to the imidazoleglycerol-phosphate dehydratase family.</text>
</comment>
<sequence length="194" mass="21435">MRQSSQARETTETKIKLNLQLDESTNVSIQTGVGFFDHMLTLFARHGRFGLQVEAEGDVFVDAHHTVEDVGIVLGNCLKEALQNKEGINRYGSAYVPMDESLGFVAIDISGRSYCVFQGELTNPKLGDFDTELTEEFFRAVAHAANITLHARVLYGSNTHHKIEALFKAFGRALREAVEKNANITGVNSTKGML</sequence>
<protein>
    <recommendedName>
        <fullName evidence="1">Imidazoleglycerol-phosphate dehydratase</fullName>
        <shortName evidence="1">IGPD</shortName>
        <ecNumber evidence="1">4.2.1.19</ecNumber>
    </recommendedName>
</protein>